<reference key="1">
    <citation type="journal article" date="1992" name="Infect. Immun.">
        <title>Coxiella burnetii superoxide dismutase gene: cloning, sequencing, and expression in Escherichia coli.</title>
        <authorList>
            <person name="Heinzen R.A."/>
            <person name="Frazier M.E."/>
            <person name="Mallavia L.P."/>
        </authorList>
    </citation>
    <scope>NUCLEOTIDE SEQUENCE [GENOMIC DNA]</scope>
    <source>
        <strain>Hamilton</strain>
    </source>
</reference>
<reference key="2">
    <citation type="journal article" date="2003" name="Proc. Natl. Acad. Sci. U.S.A.">
        <title>Complete genome sequence of the Q-fever pathogen, Coxiella burnetii.</title>
        <authorList>
            <person name="Seshadri R."/>
            <person name="Paulsen I.T."/>
            <person name="Eisen J.A."/>
            <person name="Read T.D."/>
            <person name="Nelson K.E."/>
            <person name="Nelson W.C."/>
            <person name="Ward N.L."/>
            <person name="Tettelin H."/>
            <person name="Davidsen T.M."/>
            <person name="Beanan M.J."/>
            <person name="DeBoy R.T."/>
            <person name="Daugherty S.C."/>
            <person name="Brinkac L.M."/>
            <person name="Madupu R."/>
            <person name="Dodson R.J."/>
            <person name="Khouri H.M."/>
            <person name="Lee K.H."/>
            <person name="Carty H.A."/>
            <person name="Scanlan D."/>
            <person name="Heinzen R.A."/>
            <person name="Thompson H.A."/>
            <person name="Samuel J.E."/>
            <person name="Fraser C.M."/>
            <person name="Heidelberg J.F."/>
        </authorList>
    </citation>
    <scope>NUCLEOTIDE SEQUENCE [LARGE SCALE GENOMIC DNA]</scope>
    <source>
        <strain>RSA 493 / Nine Mile phase I</strain>
    </source>
</reference>
<proteinExistence type="evidence at protein level"/>
<organism>
    <name type="scientific">Coxiella burnetii (strain RSA 493 / Nine Mile phase I)</name>
    <dbReference type="NCBI Taxonomy" id="227377"/>
    <lineage>
        <taxon>Bacteria</taxon>
        <taxon>Pseudomonadati</taxon>
        <taxon>Pseudomonadota</taxon>
        <taxon>Gammaproteobacteria</taxon>
        <taxon>Legionellales</taxon>
        <taxon>Coxiellaceae</taxon>
        <taxon>Coxiella</taxon>
    </lineage>
</organism>
<keyword id="KW-0002">3D-structure</keyword>
<keyword id="KW-0028">Amino-acid biosynthesis</keyword>
<keyword id="KW-0963">Cytoplasm</keyword>
<keyword id="KW-0220">Diaminopimelate biosynthesis</keyword>
<keyword id="KW-0457">Lysine biosynthesis</keyword>
<keyword id="KW-0520">NAD</keyword>
<keyword id="KW-0521">NADP</keyword>
<keyword id="KW-0560">Oxidoreductase</keyword>
<keyword id="KW-1185">Reference proteome</keyword>
<evidence type="ECO:0000255" key="1">
    <source>
        <dbReference type="HAMAP-Rule" id="MF_00102"/>
    </source>
</evidence>
<evidence type="ECO:0000305" key="2"/>
<evidence type="ECO:0007829" key="3">
    <source>
        <dbReference type="PDB" id="5WOL"/>
    </source>
</evidence>
<protein>
    <recommendedName>
        <fullName evidence="1">4-hydroxy-tetrahydrodipicolinate reductase</fullName>
        <shortName evidence="1">HTPA reductase</shortName>
        <ecNumber evidence="1">1.17.1.8</ecNumber>
    </recommendedName>
</protein>
<accession>P24703</accession>
<dbReference type="EC" id="1.17.1.8" evidence="1"/>
<dbReference type="EMBL" id="M74242">
    <property type="protein sequence ID" value="AAA23312.1"/>
    <property type="molecule type" value="Genomic_DNA"/>
</dbReference>
<dbReference type="EMBL" id="AE016828">
    <property type="protein sequence ID" value="AAO91204.1"/>
    <property type="molecule type" value="Genomic_DNA"/>
</dbReference>
<dbReference type="PIR" id="B44791">
    <property type="entry name" value="B44791"/>
</dbReference>
<dbReference type="RefSeq" id="NP_820690.1">
    <property type="nucleotide sequence ID" value="NC_002971.4"/>
</dbReference>
<dbReference type="RefSeq" id="WP_005770530.1">
    <property type="nucleotide sequence ID" value="NC_002971.4"/>
</dbReference>
<dbReference type="PDB" id="5WOL">
    <property type="method" value="X-ray"/>
    <property type="resolution" value="1.70 A"/>
    <property type="chains" value="A=1-239"/>
</dbReference>
<dbReference type="PDBsum" id="5WOL"/>
<dbReference type="SMR" id="P24703"/>
<dbReference type="STRING" id="227377.CBU_1709"/>
<dbReference type="EnsemblBacteria" id="AAO91204">
    <property type="protein sequence ID" value="AAO91204"/>
    <property type="gene ID" value="CBU_1709"/>
</dbReference>
<dbReference type="GeneID" id="1209620"/>
<dbReference type="KEGG" id="cbu:CBU_1709"/>
<dbReference type="PATRIC" id="fig|227377.7.peg.1695"/>
<dbReference type="eggNOG" id="COG0289">
    <property type="taxonomic scope" value="Bacteria"/>
</dbReference>
<dbReference type="HOGENOM" id="CLU_047479_0_1_6"/>
<dbReference type="OrthoDB" id="9790352at2"/>
<dbReference type="UniPathway" id="UPA00034">
    <property type="reaction ID" value="UER00018"/>
</dbReference>
<dbReference type="Proteomes" id="UP000002671">
    <property type="component" value="Chromosome"/>
</dbReference>
<dbReference type="GO" id="GO:0005829">
    <property type="term" value="C:cytosol"/>
    <property type="evidence" value="ECO:0000318"/>
    <property type="project" value="GO_Central"/>
</dbReference>
<dbReference type="GO" id="GO:0008839">
    <property type="term" value="F:4-hydroxy-tetrahydrodipicolinate reductase"/>
    <property type="evidence" value="ECO:0000318"/>
    <property type="project" value="GO_Central"/>
</dbReference>
<dbReference type="GO" id="GO:0051287">
    <property type="term" value="F:NAD binding"/>
    <property type="evidence" value="ECO:0007669"/>
    <property type="project" value="UniProtKB-UniRule"/>
</dbReference>
<dbReference type="GO" id="GO:0050661">
    <property type="term" value="F:NADP binding"/>
    <property type="evidence" value="ECO:0007669"/>
    <property type="project" value="UniProtKB-UniRule"/>
</dbReference>
<dbReference type="GO" id="GO:0016726">
    <property type="term" value="F:oxidoreductase activity, acting on CH or CH2 groups, NAD or NADP as acceptor"/>
    <property type="evidence" value="ECO:0007669"/>
    <property type="project" value="UniProtKB-UniRule"/>
</dbReference>
<dbReference type="GO" id="GO:0019877">
    <property type="term" value="P:diaminopimelate biosynthetic process"/>
    <property type="evidence" value="ECO:0000318"/>
    <property type="project" value="GO_Central"/>
</dbReference>
<dbReference type="GO" id="GO:0009089">
    <property type="term" value="P:lysine biosynthetic process via diaminopimelate"/>
    <property type="evidence" value="ECO:0007669"/>
    <property type="project" value="UniProtKB-UniRule"/>
</dbReference>
<dbReference type="CDD" id="cd02274">
    <property type="entry name" value="DHDPR_N"/>
    <property type="match status" value="1"/>
</dbReference>
<dbReference type="FunFam" id="3.30.360.10:FF:000009">
    <property type="entry name" value="4-hydroxy-tetrahydrodipicolinate reductase"/>
    <property type="match status" value="1"/>
</dbReference>
<dbReference type="Gene3D" id="3.30.360.10">
    <property type="entry name" value="Dihydrodipicolinate Reductase, domain 2"/>
    <property type="match status" value="1"/>
</dbReference>
<dbReference type="Gene3D" id="3.40.50.720">
    <property type="entry name" value="NAD(P)-binding Rossmann-like Domain"/>
    <property type="match status" value="1"/>
</dbReference>
<dbReference type="HAMAP" id="MF_00102">
    <property type="entry name" value="DapB"/>
    <property type="match status" value="1"/>
</dbReference>
<dbReference type="InterPro" id="IPR022663">
    <property type="entry name" value="DapB_C"/>
</dbReference>
<dbReference type="InterPro" id="IPR000846">
    <property type="entry name" value="DapB_N"/>
</dbReference>
<dbReference type="InterPro" id="IPR022664">
    <property type="entry name" value="DapB_N_CS"/>
</dbReference>
<dbReference type="InterPro" id="IPR023940">
    <property type="entry name" value="DHDPR_bac"/>
</dbReference>
<dbReference type="InterPro" id="IPR036291">
    <property type="entry name" value="NAD(P)-bd_dom_sf"/>
</dbReference>
<dbReference type="NCBIfam" id="TIGR00036">
    <property type="entry name" value="dapB"/>
    <property type="match status" value="1"/>
</dbReference>
<dbReference type="PANTHER" id="PTHR20836:SF0">
    <property type="entry name" value="4-HYDROXY-TETRAHYDRODIPICOLINATE REDUCTASE 1, CHLOROPLASTIC-RELATED"/>
    <property type="match status" value="1"/>
</dbReference>
<dbReference type="PANTHER" id="PTHR20836">
    <property type="entry name" value="DIHYDRODIPICOLINATE REDUCTASE"/>
    <property type="match status" value="1"/>
</dbReference>
<dbReference type="Pfam" id="PF05173">
    <property type="entry name" value="DapB_C"/>
    <property type="match status" value="1"/>
</dbReference>
<dbReference type="Pfam" id="PF01113">
    <property type="entry name" value="DapB_N"/>
    <property type="match status" value="1"/>
</dbReference>
<dbReference type="PIRSF" id="PIRSF000161">
    <property type="entry name" value="DHPR"/>
    <property type="match status" value="1"/>
</dbReference>
<dbReference type="SUPFAM" id="SSF55347">
    <property type="entry name" value="Glyceraldehyde-3-phosphate dehydrogenase-like, C-terminal domain"/>
    <property type="match status" value="1"/>
</dbReference>
<dbReference type="SUPFAM" id="SSF51735">
    <property type="entry name" value="NAD(P)-binding Rossmann-fold domains"/>
    <property type="match status" value="1"/>
</dbReference>
<dbReference type="PROSITE" id="PS01298">
    <property type="entry name" value="DAPB"/>
    <property type="match status" value="1"/>
</dbReference>
<name>DAPB_COXBU</name>
<comment type="function">
    <text evidence="1">Catalyzes the conversion of 4-hydroxy-tetrahydrodipicolinate (HTPA) to tetrahydrodipicolinate.</text>
</comment>
<comment type="catalytic activity">
    <reaction evidence="1">
        <text>(S)-2,3,4,5-tetrahydrodipicolinate + NAD(+) + H2O = (2S,4S)-4-hydroxy-2,3,4,5-tetrahydrodipicolinate + NADH + H(+)</text>
        <dbReference type="Rhea" id="RHEA:35323"/>
        <dbReference type="ChEBI" id="CHEBI:15377"/>
        <dbReference type="ChEBI" id="CHEBI:15378"/>
        <dbReference type="ChEBI" id="CHEBI:16845"/>
        <dbReference type="ChEBI" id="CHEBI:57540"/>
        <dbReference type="ChEBI" id="CHEBI:57945"/>
        <dbReference type="ChEBI" id="CHEBI:67139"/>
        <dbReference type="EC" id="1.17.1.8"/>
    </reaction>
</comment>
<comment type="catalytic activity">
    <reaction evidence="1">
        <text>(S)-2,3,4,5-tetrahydrodipicolinate + NADP(+) + H2O = (2S,4S)-4-hydroxy-2,3,4,5-tetrahydrodipicolinate + NADPH + H(+)</text>
        <dbReference type="Rhea" id="RHEA:35331"/>
        <dbReference type="ChEBI" id="CHEBI:15377"/>
        <dbReference type="ChEBI" id="CHEBI:15378"/>
        <dbReference type="ChEBI" id="CHEBI:16845"/>
        <dbReference type="ChEBI" id="CHEBI:57783"/>
        <dbReference type="ChEBI" id="CHEBI:58349"/>
        <dbReference type="ChEBI" id="CHEBI:67139"/>
        <dbReference type="EC" id="1.17.1.8"/>
    </reaction>
</comment>
<comment type="pathway">
    <text evidence="1">Amino-acid biosynthesis; L-lysine biosynthesis via DAP pathway; (S)-tetrahydrodipicolinate from L-aspartate: step 4/4.</text>
</comment>
<comment type="subcellular location">
    <subcellularLocation>
        <location evidence="1">Cytoplasm</location>
    </subcellularLocation>
</comment>
<comment type="similarity">
    <text evidence="1">Belongs to the DapB family.</text>
</comment>
<comment type="caution">
    <text evidence="2">Was originally thought to be a dihydrodipicolinate reductase (DHDPR), catalyzing the conversion of dihydrodipicolinate to tetrahydrodipicolinate. However, it was shown in E.coli that the substrate of the enzymatic reaction is not dihydrodipicolinate (DHDP) but in fact (2S,4S)-4-hydroxy-2,3,4,5-tetrahydrodipicolinic acid (HTPA), the product released by the DapA-catalyzed reaction.</text>
</comment>
<gene>
    <name evidence="1" type="primary">dapB</name>
    <name type="ordered locus">CBU_1709</name>
</gene>
<sequence length="239" mass="26232">MAINVIINGINGKMGRVVKENITAQSDLELVSGTGRQDDLAKTIQTTHADVVIDFTTPQSVFHNAEIIIQSGARPVIGTTGLTLEQIALLDKQCRNKKLGAIVAPNFSVGAVLMMKYAKEAAHYFPDVEIIEMHHSQKIDAPSGTAIKTAQMIGEMRSSKKDEPFKDRARGEIKNGIPIHSIRLPGLFSHQSVIFGSNGETLTIRHDGMDRNCTMPGIFMACRKVMELDYLVYGLENLL</sequence>
<feature type="chain" id="PRO_0000141436" description="4-hydroxy-tetrahydrodipicolinate reductase">
    <location>
        <begin position="1"/>
        <end position="239"/>
    </location>
</feature>
<feature type="active site" description="Proton donor/acceptor" evidence="1">
    <location>
        <position position="134"/>
    </location>
</feature>
<feature type="active site" description="Proton donor" evidence="1">
    <location>
        <position position="138"/>
    </location>
</feature>
<feature type="binding site" evidence="1">
    <location>
        <begin position="9"/>
        <end position="14"/>
    </location>
    <ligand>
        <name>NAD(+)</name>
        <dbReference type="ChEBI" id="CHEBI:57540"/>
    </ligand>
</feature>
<feature type="binding site" evidence="1">
    <location>
        <begin position="78"/>
        <end position="80"/>
    </location>
    <ligand>
        <name>NAD(+)</name>
        <dbReference type="ChEBI" id="CHEBI:57540"/>
    </ligand>
</feature>
<feature type="binding site" evidence="1">
    <location>
        <begin position="104"/>
        <end position="107"/>
    </location>
    <ligand>
        <name>NAD(+)</name>
        <dbReference type="ChEBI" id="CHEBI:57540"/>
    </ligand>
</feature>
<feature type="binding site" evidence="1">
    <location>
        <position position="135"/>
    </location>
    <ligand>
        <name>(S)-2,3,4,5-tetrahydrodipicolinate</name>
        <dbReference type="ChEBI" id="CHEBI:16845"/>
    </ligand>
</feature>
<feature type="binding site" evidence="1">
    <location>
        <begin position="144"/>
        <end position="145"/>
    </location>
    <ligand>
        <name>(S)-2,3,4,5-tetrahydrodipicolinate</name>
        <dbReference type="ChEBI" id="CHEBI:16845"/>
    </ligand>
</feature>
<feature type="sequence conflict" description="In Ref. 1; AAA23312." evidence="2" ref="1">
    <original>T</original>
    <variation>S</variation>
    <location>
        <position position="56"/>
    </location>
</feature>
<feature type="sequence conflict" description="In Ref. 1; AAA23312." evidence="2" ref="1">
    <original>SKKDEPFKDRARGEIKNGIPIHSIRLPGLFSHQSVIFGSNGETLTIRHDGMDRNCTMPGIFMACRKVMELDYLVYGLENLL</original>
    <variation>HPHQDAAEKSSR</variation>
    <location>
        <begin position="159"/>
        <end position="239"/>
    </location>
</feature>
<feature type="strand" evidence="3">
    <location>
        <begin position="3"/>
        <end position="8"/>
    </location>
</feature>
<feature type="turn" evidence="3">
    <location>
        <begin position="9"/>
        <end position="11"/>
    </location>
</feature>
<feature type="helix" evidence="3">
    <location>
        <begin position="13"/>
        <end position="22"/>
    </location>
</feature>
<feature type="strand" evidence="3">
    <location>
        <begin position="28"/>
        <end position="34"/>
    </location>
</feature>
<feature type="helix" evidence="3">
    <location>
        <begin position="40"/>
        <end position="47"/>
    </location>
</feature>
<feature type="strand" evidence="3">
    <location>
        <begin position="50"/>
        <end position="54"/>
    </location>
</feature>
<feature type="turn" evidence="3">
    <location>
        <begin position="58"/>
        <end position="60"/>
    </location>
</feature>
<feature type="helix" evidence="3">
    <location>
        <begin position="61"/>
        <end position="70"/>
    </location>
</feature>
<feature type="strand" evidence="3">
    <location>
        <begin position="74"/>
        <end position="77"/>
    </location>
</feature>
<feature type="helix" evidence="3">
    <location>
        <begin position="84"/>
        <end position="97"/>
    </location>
</feature>
<feature type="strand" evidence="3">
    <location>
        <begin position="101"/>
        <end position="103"/>
    </location>
</feature>
<feature type="helix" evidence="3">
    <location>
        <begin position="109"/>
        <end position="121"/>
    </location>
</feature>
<feature type="turn" evidence="3">
    <location>
        <begin position="122"/>
        <end position="124"/>
    </location>
</feature>
<feature type="strand" evidence="3">
    <location>
        <begin position="127"/>
        <end position="134"/>
    </location>
</feature>
<feature type="strand" evidence="3">
    <location>
        <begin position="140"/>
        <end position="142"/>
    </location>
</feature>
<feature type="helix" evidence="3">
    <location>
        <begin position="144"/>
        <end position="158"/>
    </location>
</feature>
<feature type="strand" evidence="3">
    <location>
        <begin position="172"/>
        <end position="174"/>
    </location>
</feature>
<feature type="strand" evidence="3">
    <location>
        <begin position="177"/>
        <end position="183"/>
    </location>
</feature>
<feature type="strand" evidence="3">
    <location>
        <begin position="189"/>
        <end position="197"/>
    </location>
</feature>
<feature type="strand" evidence="3">
    <location>
        <begin position="200"/>
        <end position="208"/>
    </location>
</feature>
<feature type="helix" evidence="3">
    <location>
        <begin position="211"/>
        <end position="214"/>
    </location>
</feature>
<feature type="helix" evidence="3">
    <location>
        <begin position="215"/>
        <end position="224"/>
    </location>
</feature>
<feature type="helix" evidence="3">
    <location>
        <begin position="225"/>
        <end position="227"/>
    </location>
</feature>
<feature type="strand" evidence="3">
    <location>
        <begin position="229"/>
        <end position="234"/>
    </location>
</feature>
<feature type="helix" evidence="3">
    <location>
        <begin position="235"/>
        <end position="238"/>
    </location>
</feature>